<protein>
    <recommendedName>
        <fullName>Putative uncharacterized protein YNL089C</fullName>
    </recommendedName>
</protein>
<feature type="chain" id="PRO_0000203443" description="Putative uncharacterized protein YNL089C">
    <location>
        <begin position="1"/>
        <end position="158"/>
    </location>
</feature>
<proteinExistence type="uncertain"/>
<reference key="1">
    <citation type="journal article" date="2005" name="Nat. Genet.">
        <title>Quantitative trait loci mapped to single-nucleotide resolution in yeast.</title>
        <authorList>
            <person name="Deutschbauer A.M."/>
            <person name="Davis R.W."/>
        </authorList>
    </citation>
    <scope>NUCLEOTIDE SEQUENCE [GENOMIC DNA]</scope>
    <source>
        <strain>SK1</strain>
    </source>
</reference>
<reference key="2">
    <citation type="journal article" date="1996" name="Yeast">
        <title>The sequence of a 17,933 bp segment of Saccharomyces cerevisiae chromosome XIV contains the RHO2, TOP2, MKT1 and END3 genes and five new open reading frames.</title>
        <authorList>
            <person name="Soler-Mira A."/>
            <person name="Saiz J.E."/>
            <person name="Ballesta J.P.G."/>
            <person name="Remacha M.A."/>
        </authorList>
    </citation>
    <scope>NUCLEOTIDE SEQUENCE [GENOMIC DNA]</scope>
    <source>
        <strain>ATCC 96604 / S288c / FY1679</strain>
    </source>
</reference>
<reference key="3">
    <citation type="journal article" date="1997" name="Nature">
        <title>The nucleotide sequence of Saccharomyces cerevisiae chromosome XIV and its evolutionary implications.</title>
        <authorList>
            <person name="Philippsen P."/>
            <person name="Kleine K."/>
            <person name="Poehlmann R."/>
            <person name="Duesterhoeft A."/>
            <person name="Hamberg K."/>
            <person name="Hegemann J.H."/>
            <person name="Obermaier B."/>
            <person name="Urrestarazu L.A."/>
            <person name="Aert R."/>
            <person name="Albermann K."/>
            <person name="Altmann R."/>
            <person name="Andre B."/>
            <person name="Baladron V."/>
            <person name="Ballesta J.P.G."/>
            <person name="Becam A.-M."/>
            <person name="Beinhauer J.D."/>
            <person name="Boskovic J."/>
            <person name="Buitrago M.J."/>
            <person name="Bussereau F."/>
            <person name="Coster F."/>
            <person name="Crouzet M."/>
            <person name="D'Angelo M."/>
            <person name="Dal Pero F."/>
            <person name="De Antoni A."/>
            <person name="del Rey F."/>
            <person name="Doignon F."/>
            <person name="Domdey H."/>
            <person name="Dubois E."/>
            <person name="Fiedler T.A."/>
            <person name="Fleig U."/>
            <person name="Floeth M."/>
            <person name="Fritz C."/>
            <person name="Gaillardin C."/>
            <person name="Garcia-Cantalejo J.M."/>
            <person name="Glansdorff N."/>
            <person name="Goffeau A."/>
            <person name="Gueldener U."/>
            <person name="Herbert C.J."/>
            <person name="Heumann K."/>
            <person name="Heuss-Neitzel D."/>
            <person name="Hilbert H."/>
            <person name="Hinni K."/>
            <person name="Iraqui Houssaini I."/>
            <person name="Jacquet M."/>
            <person name="Jimenez A."/>
            <person name="Jonniaux J.-L."/>
            <person name="Karpfinger-Hartl L."/>
            <person name="Lanfranchi G."/>
            <person name="Lepingle A."/>
            <person name="Levesque H."/>
            <person name="Lyck R."/>
            <person name="Maftahi M."/>
            <person name="Mallet L."/>
            <person name="Maurer C.T.C."/>
            <person name="Messenguy F."/>
            <person name="Mewes H.-W."/>
            <person name="Moestl D."/>
            <person name="Nasr F."/>
            <person name="Nicaud J.-M."/>
            <person name="Niedenthal R.K."/>
            <person name="Pandolfo D."/>
            <person name="Pierard A."/>
            <person name="Piravandi E."/>
            <person name="Planta R.J."/>
            <person name="Pohl T.M."/>
            <person name="Purnelle B."/>
            <person name="Rebischung C."/>
            <person name="Remacha M.A."/>
            <person name="Revuelta J.L."/>
            <person name="Rinke M."/>
            <person name="Saiz J.E."/>
            <person name="Sartorello F."/>
            <person name="Scherens B."/>
            <person name="Sen-Gupta M."/>
            <person name="Soler-Mira A."/>
            <person name="Urbanus J.H.M."/>
            <person name="Valle G."/>
            <person name="Van Dyck L."/>
            <person name="Verhasselt P."/>
            <person name="Vierendeels F."/>
            <person name="Vissers S."/>
            <person name="Voet M."/>
            <person name="Volckaert G."/>
            <person name="Wach A."/>
            <person name="Wambutt R."/>
            <person name="Wedler H."/>
            <person name="Zollner A."/>
            <person name="Hani J."/>
        </authorList>
    </citation>
    <scope>NUCLEOTIDE SEQUENCE [LARGE SCALE GENOMIC DNA]</scope>
    <source>
        <strain>ATCC 204508 / S288c</strain>
    </source>
</reference>
<reference key="4">
    <citation type="journal article" date="2014" name="G3 (Bethesda)">
        <title>The reference genome sequence of Saccharomyces cerevisiae: Then and now.</title>
        <authorList>
            <person name="Engel S.R."/>
            <person name="Dietrich F.S."/>
            <person name="Fisk D.G."/>
            <person name="Binkley G."/>
            <person name="Balakrishnan R."/>
            <person name="Costanzo M.C."/>
            <person name="Dwight S.S."/>
            <person name="Hitz B.C."/>
            <person name="Karra K."/>
            <person name="Nash R.S."/>
            <person name="Weng S."/>
            <person name="Wong E.D."/>
            <person name="Lloyd P."/>
            <person name="Skrzypek M.S."/>
            <person name="Miyasato S.R."/>
            <person name="Simison M."/>
            <person name="Cherry J.M."/>
        </authorList>
    </citation>
    <scope>GENOME REANNOTATION</scope>
    <source>
        <strain>ATCC 204508 / S288c</strain>
    </source>
</reference>
<dbReference type="EMBL" id="DQ115393">
    <property type="protein sequence ID" value="AAZ22519.1"/>
    <property type="molecule type" value="Genomic_DNA"/>
</dbReference>
<dbReference type="EMBL" id="Z71366">
    <property type="protein sequence ID" value="CAA95966.1"/>
    <property type="molecule type" value="Genomic_DNA"/>
</dbReference>
<dbReference type="PIR" id="S63028">
    <property type="entry name" value="S63028"/>
</dbReference>
<dbReference type="IntAct" id="P53936">
    <property type="interactions" value="1"/>
</dbReference>
<dbReference type="STRING" id="4932.YNL089C"/>
<dbReference type="PaxDb" id="4932-YNL089C"/>
<dbReference type="EnsemblFungi" id="YNL089C_mRNA">
    <property type="protein sequence ID" value="YNL089C"/>
    <property type="gene ID" value="YNL089C"/>
</dbReference>
<dbReference type="AGR" id="SGD:S000005033"/>
<dbReference type="SGD" id="S000005033">
    <property type="gene designation" value="YNL089C"/>
</dbReference>
<dbReference type="HOGENOM" id="CLU_1670743_0_0_1"/>
<organism>
    <name type="scientific">Saccharomyces cerevisiae (strain ATCC 204508 / S288c)</name>
    <name type="common">Baker's yeast</name>
    <dbReference type="NCBI Taxonomy" id="559292"/>
    <lineage>
        <taxon>Eukaryota</taxon>
        <taxon>Fungi</taxon>
        <taxon>Dikarya</taxon>
        <taxon>Ascomycota</taxon>
        <taxon>Saccharomycotina</taxon>
        <taxon>Saccharomycetes</taxon>
        <taxon>Saccharomycetales</taxon>
        <taxon>Saccharomycetaceae</taxon>
        <taxon>Saccharomyces</taxon>
    </lineage>
</organism>
<evidence type="ECO:0000305" key="1"/>
<evidence type="ECO:0000305" key="2">
    <source>
    </source>
</evidence>
<gene>
    <name type="ordered locus">YNL089C</name>
    <name type="ORF">N2242</name>
</gene>
<accession>P53936</accession>
<accession>Q45TZ1</accession>
<comment type="miscellaneous">
    <text evidence="1">Almost completely overlaps RHO2.</text>
</comment>
<comment type="caution">
    <text evidence="2">Product of a dubious gene prediction unlikely to encode a functional protein. Because of that it is not part of the S.cerevisiae S288c complete/reference proteome set.</text>
</comment>
<sequence>MYHFSVSFFYKIMQQLAPGSFFISKLVLVATSKTSSTPSPVSALHSMYFLAPMALATCFASSMGTISSVAFSLKWASCLKSFFKPTRTIGASGQYRNASSAHFVLALISDSKLSTANPINIISAFEYENGRKRSYSSCPAVSQSVKDTFIPSTLQSVT</sequence>
<name>YNI9_YEAST</name>